<proteinExistence type="evidence at protein level"/>
<dbReference type="EC" id="2.4.1.351" evidence="5"/>
<dbReference type="EMBL" id="AC007576">
    <property type="protein sequence ID" value="AAD39288.1"/>
    <property type="status" value="ALT_SEQ"/>
    <property type="molecule type" value="Genomic_DNA"/>
</dbReference>
<dbReference type="EMBL" id="AC068197">
    <property type="protein sequence ID" value="AAF79406.1"/>
    <property type="status" value="ALT_SEQ"/>
    <property type="molecule type" value="Genomic_DNA"/>
</dbReference>
<dbReference type="EMBL" id="CP002684">
    <property type="protein sequence ID" value="AEE29099.1"/>
    <property type="molecule type" value="Genomic_DNA"/>
</dbReference>
<dbReference type="EMBL" id="BT010612">
    <property type="protein sequence ID" value="AAQ89634.1"/>
    <property type="molecule type" value="mRNA"/>
</dbReference>
<dbReference type="EMBL" id="AK229836">
    <property type="protein sequence ID" value="BAF01665.1"/>
    <property type="molecule type" value="mRNA"/>
</dbReference>
<dbReference type="EMBL" id="AK229994">
    <property type="protein sequence ID" value="BAF01818.1"/>
    <property type="molecule type" value="mRNA"/>
</dbReference>
<dbReference type="PIR" id="E86273">
    <property type="entry name" value="E86273"/>
</dbReference>
<dbReference type="RefSeq" id="NP_172855.2">
    <property type="nucleotide sequence ID" value="NM_101268.3"/>
</dbReference>
<dbReference type="FunCoup" id="Q6NQ51">
    <property type="interactions" value="1954"/>
</dbReference>
<dbReference type="IntAct" id="Q6NQ51">
    <property type="interactions" value="89"/>
</dbReference>
<dbReference type="STRING" id="3702.Q6NQ51"/>
<dbReference type="GlyCosmos" id="Q6NQ51">
    <property type="glycosylation" value="6 sites, No reported glycans"/>
</dbReference>
<dbReference type="GlyGen" id="Q6NQ51">
    <property type="glycosylation" value="6 sites"/>
</dbReference>
<dbReference type="iPTMnet" id="Q6NQ51"/>
<dbReference type="PaxDb" id="3702-AT1G14020.1"/>
<dbReference type="ProteomicsDB" id="236202"/>
<dbReference type="EnsemblPlants" id="AT1G14020.1">
    <property type="protein sequence ID" value="AT1G14020.1"/>
    <property type="gene ID" value="AT1G14020"/>
</dbReference>
<dbReference type="GeneID" id="837963"/>
<dbReference type="Gramene" id="AT1G14020.1">
    <property type="protein sequence ID" value="AT1G14020.1"/>
    <property type="gene ID" value="AT1G14020"/>
</dbReference>
<dbReference type="KEGG" id="ath:AT1G14020"/>
<dbReference type="Araport" id="AT1G14020"/>
<dbReference type="TAIR" id="AT1G14020">
    <property type="gene designation" value="RRT4"/>
</dbReference>
<dbReference type="eggNOG" id="ENOG502QT8R">
    <property type="taxonomic scope" value="Eukaryota"/>
</dbReference>
<dbReference type="HOGENOM" id="CLU_018420_0_0_1"/>
<dbReference type="InParanoid" id="Q6NQ51"/>
<dbReference type="OMA" id="LWHPHLL"/>
<dbReference type="PhylomeDB" id="Q6NQ51"/>
<dbReference type="UniPathway" id="UPA00845"/>
<dbReference type="PRO" id="PR:Q6NQ51"/>
<dbReference type="Proteomes" id="UP000006548">
    <property type="component" value="Chromosome 1"/>
</dbReference>
<dbReference type="ExpressionAtlas" id="Q6NQ51">
    <property type="expression patterns" value="baseline and differential"/>
</dbReference>
<dbReference type="GO" id="GO:0000139">
    <property type="term" value="C:Golgi membrane"/>
    <property type="evidence" value="ECO:0007669"/>
    <property type="project" value="UniProtKB-SubCell"/>
</dbReference>
<dbReference type="GO" id="GO:0016757">
    <property type="term" value="F:glycosyltransferase activity"/>
    <property type="evidence" value="ECO:0007669"/>
    <property type="project" value="UniProtKB-KW"/>
</dbReference>
<dbReference type="GO" id="GO:0071555">
    <property type="term" value="P:cell wall organization"/>
    <property type="evidence" value="ECO:0007669"/>
    <property type="project" value="UniProtKB-KW"/>
</dbReference>
<dbReference type="GO" id="GO:0006004">
    <property type="term" value="P:fucose metabolic process"/>
    <property type="evidence" value="ECO:0007669"/>
    <property type="project" value="UniProtKB-KW"/>
</dbReference>
<dbReference type="GO" id="GO:0045489">
    <property type="term" value="P:pectin biosynthetic process"/>
    <property type="evidence" value="ECO:0007669"/>
    <property type="project" value="UniProtKB-UniPathway"/>
</dbReference>
<dbReference type="CDD" id="cd11299">
    <property type="entry name" value="O-FucT_plant"/>
    <property type="match status" value="1"/>
</dbReference>
<dbReference type="FunFam" id="3.40.50.11350:FF:000011">
    <property type="entry name" value="O-fucosyltransferase 28"/>
    <property type="match status" value="1"/>
</dbReference>
<dbReference type="Gene3D" id="3.40.50.11350">
    <property type="match status" value="1"/>
</dbReference>
<dbReference type="InterPro" id="IPR024709">
    <property type="entry name" value="FucosylTrfase_pln"/>
</dbReference>
<dbReference type="InterPro" id="IPR019378">
    <property type="entry name" value="GDP-Fuc_O-FucTrfase"/>
</dbReference>
<dbReference type="PANTHER" id="PTHR31741">
    <property type="entry name" value="OS02G0726500 PROTEIN-RELATED"/>
    <property type="match status" value="1"/>
</dbReference>
<dbReference type="PANTHER" id="PTHR31741:SF51">
    <property type="entry name" value="RHAMNOGALACTURONAN I RHAMNOSYLTRANSFERASE 1"/>
    <property type="match status" value="1"/>
</dbReference>
<dbReference type="Pfam" id="PF10250">
    <property type="entry name" value="O-FucT"/>
    <property type="match status" value="1"/>
</dbReference>
<dbReference type="PIRSF" id="PIRSF009360">
    <property type="entry name" value="UCP009360"/>
    <property type="match status" value="1"/>
</dbReference>
<evidence type="ECO:0000250" key="1">
    <source>
        <dbReference type="UniProtKB" id="Q4V398"/>
    </source>
</evidence>
<evidence type="ECO:0000250" key="2">
    <source>
        <dbReference type="UniProtKB" id="Q9H488"/>
    </source>
</evidence>
<evidence type="ECO:0000255" key="3"/>
<evidence type="ECO:0000255" key="4">
    <source>
        <dbReference type="PROSITE-ProRule" id="PRU00498"/>
    </source>
</evidence>
<evidence type="ECO:0000269" key="5">
    <source>
    </source>
</evidence>
<evidence type="ECO:0000303" key="6">
    <source>
    </source>
</evidence>
<evidence type="ECO:0000305" key="7"/>
<evidence type="ECO:0000305" key="8">
    <source>
    </source>
</evidence>
<evidence type="ECO:0000312" key="9">
    <source>
        <dbReference type="Araport" id="AT1G14020"/>
    </source>
</evidence>
<evidence type="ECO:0000312" key="10">
    <source>
        <dbReference type="EMBL" id="AAD39288.1"/>
    </source>
</evidence>
<evidence type="ECO:0000312" key="11">
    <source>
        <dbReference type="EMBL" id="AAF79406.1"/>
    </source>
</evidence>
<reference key="1">
    <citation type="journal article" date="2000" name="Nature">
        <title>Sequence and analysis of chromosome 1 of the plant Arabidopsis thaliana.</title>
        <authorList>
            <person name="Theologis A."/>
            <person name="Ecker J.R."/>
            <person name="Palm C.J."/>
            <person name="Federspiel N.A."/>
            <person name="Kaul S."/>
            <person name="White O."/>
            <person name="Alonso J."/>
            <person name="Altafi H."/>
            <person name="Araujo R."/>
            <person name="Bowman C.L."/>
            <person name="Brooks S.Y."/>
            <person name="Buehler E."/>
            <person name="Chan A."/>
            <person name="Chao Q."/>
            <person name="Chen H."/>
            <person name="Cheuk R.F."/>
            <person name="Chin C.W."/>
            <person name="Chung M.K."/>
            <person name="Conn L."/>
            <person name="Conway A.B."/>
            <person name="Conway A.R."/>
            <person name="Creasy T.H."/>
            <person name="Dewar K."/>
            <person name="Dunn P."/>
            <person name="Etgu P."/>
            <person name="Feldblyum T.V."/>
            <person name="Feng J.-D."/>
            <person name="Fong B."/>
            <person name="Fujii C.Y."/>
            <person name="Gill J.E."/>
            <person name="Goldsmith A.D."/>
            <person name="Haas B."/>
            <person name="Hansen N.F."/>
            <person name="Hughes B."/>
            <person name="Huizar L."/>
            <person name="Hunter J.L."/>
            <person name="Jenkins J."/>
            <person name="Johnson-Hopson C."/>
            <person name="Khan S."/>
            <person name="Khaykin E."/>
            <person name="Kim C.J."/>
            <person name="Koo H.L."/>
            <person name="Kremenetskaia I."/>
            <person name="Kurtz D.B."/>
            <person name="Kwan A."/>
            <person name="Lam B."/>
            <person name="Langin-Hooper S."/>
            <person name="Lee A."/>
            <person name="Lee J.M."/>
            <person name="Lenz C.A."/>
            <person name="Li J.H."/>
            <person name="Li Y.-P."/>
            <person name="Lin X."/>
            <person name="Liu S.X."/>
            <person name="Liu Z.A."/>
            <person name="Luros J.S."/>
            <person name="Maiti R."/>
            <person name="Marziali A."/>
            <person name="Militscher J."/>
            <person name="Miranda M."/>
            <person name="Nguyen M."/>
            <person name="Nierman W.C."/>
            <person name="Osborne B.I."/>
            <person name="Pai G."/>
            <person name="Peterson J."/>
            <person name="Pham P.K."/>
            <person name="Rizzo M."/>
            <person name="Rooney T."/>
            <person name="Rowley D."/>
            <person name="Sakano H."/>
            <person name="Salzberg S.L."/>
            <person name="Schwartz J.R."/>
            <person name="Shinn P."/>
            <person name="Southwick A.M."/>
            <person name="Sun H."/>
            <person name="Tallon L.J."/>
            <person name="Tambunga G."/>
            <person name="Toriumi M.J."/>
            <person name="Town C.D."/>
            <person name="Utterback T."/>
            <person name="Van Aken S."/>
            <person name="Vaysberg M."/>
            <person name="Vysotskaia V.S."/>
            <person name="Walker M."/>
            <person name="Wu D."/>
            <person name="Yu G."/>
            <person name="Fraser C.M."/>
            <person name="Venter J.C."/>
            <person name="Davis R.W."/>
        </authorList>
    </citation>
    <scope>NUCLEOTIDE SEQUENCE [LARGE SCALE GENOMIC DNA]</scope>
    <source>
        <strain>cv. Columbia</strain>
    </source>
</reference>
<reference key="2">
    <citation type="journal article" date="2017" name="Plant J.">
        <title>Araport11: a complete reannotation of the Arabidopsis thaliana reference genome.</title>
        <authorList>
            <person name="Cheng C.Y."/>
            <person name="Krishnakumar V."/>
            <person name="Chan A.P."/>
            <person name="Thibaud-Nissen F."/>
            <person name="Schobel S."/>
            <person name="Town C.D."/>
        </authorList>
    </citation>
    <scope>GENOME REANNOTATION</scope>
    <source>
        <strain>cv. Columbia</strain>
    </source>
</reference>
<reference key="3">
    <citation type="submission" date="2003-10" db="EMBL/GenBank/DDBJ databases">
        <title>Arabidopsis ORF clones.</title>
        <authorList>
            <person name="Cheuk R.F."/>
            <person name="Chen H."/>
            <person name="Kim C.J."/>
            <person name="Shinn P."/>
            <person name="Carninci P."/>
            <person name="Hayashizaki Y."/>
            <person name="Ishida J."/>
            <person name="Kamiya A."/>
            <person name="Kawai J."/>
            <person name="Narusaka M."/>
            <person name="Sakurai T."/>
            <person name="Satou M."/>
            <person name="Seki M."/>
            <person name="Shinozaki K."/>
            <person name="Ecker J.R."/>
        </authorList>
    </citation>
    <scope>NUCLEOTIDE SEQUENCE [LARGE SCALE MRNA]</scope>
    <source>
        <strain>cv. Columbia</strain>
    </source>
</reference>
<reference key="4">
    <citation type="submission" date="2006-07" db="EMBL/GenBank/DDBJ databases">
        <title>Large-scale analysis of RIKEN Arabidopsis full-length (RAFL) cDNAs.</title>
        <authorList>
            <person name="Totoki Y."/>
            <person name="Seki M."/>
            <person name="Ishida J."/>
            <person name="Nakajima M."/>
            <person name="Enju A."/>
            <person name="Kamiya A."/>
            <person name="Narusaka M."/>
            <person name="Shin-i T."/>
            <person name="Nakagawa M."/>
            <person name="Sakamoto N."/>
            <person name="Oishi K."/>
            <person name="Kohara Y."/>
            <person name="Kobayashi M."/>
            <person name="Toyoda A."/>
            <person name="Sakaki Y."/>
            <person name="Sakurai T."/>
            <person name="Iida K."/>
            <person name="Akiyama K."/>
            <person name="Satou M."/>
            <person name="Toyoda T."/>
            <person name="Konagaya A."/>
            <person name="Carninci P."/>
            <person name="Kawai J."/>
            <person name="Hayashizaki Y."/>
            <person name="Shinozaki K."/>
        </authorList>
    </citation>
    <scope>NUCLEOTIDE SEQUENCE [LARGE SCALE MRNA]</scope>
    <source>
        <strain>cv. Columbia</strain>
    </source>
</reference>
<reference key="5">
    <citation type="journal article" date="2012" name="Front. Plant Sci.">
        <title>Plant glycosyltransferases beyond CAZy: a perspective on DUF families.</title>
        <authorList>
            <person name="Hansen S.F."/>
            <person name="Harholt J."/>
            <person name="Oikawa A."/>
            <person name="Scheller H.V."/>
        </authorList>
    </citation>
    <scope>GENE FAMILY</scope>
    <scope>REVIEW</scope>
</reference>
<reference key="6">
    <citation type="journal article" date="2012" name="PLoS ONE">
        <title>The FRIABLE1 gene product affects cell adhesion in Arabidopsis.</title>
        <authorList>
            <person name="Neumetzler L."/>
            <person name="Humphrey T."/>
            <person name="Lumba S."/>
            <person name="Snyder S."/>
            <person name="Yeats T.H."/>
            <person name="Usadel B."/>
            <person name="Vasilevski A."/>
            <person name="Patel J."/>
            <person name="Rose J.K."/>
            <person name="Persson S."/>
            <person name="Bonetta D."/>
        </authorList>
    </citation>
    <scope>GENE FAMILY</scope>
</reference>
<reference key="7">
    <citation type="journal article" date="2012" name="PLoS ONE">
        <title>Identification of putative rhamnogalacturonan-II specific glycosyltransferases in Arabidopsis using a combination of bioinformatics approaches.</title>
        <authorList>
            <person name="Voxeur A."/>
            <person name="Andre A."/>
            <person name="Breton C."/>
            <person name="Lerouge P."/>
        </authorList>
    </citation>
    <scope>GENE FAMILY</scope>
</reference>
<reference key="8">
    <citation type="journal article" date="2013" name="Plant J.">
        <title>Identification of an additional protein involved in mannan biosynthesis.</title>
        <authorList>
            <person name="Wang Y."/>
            <person name="Mortimer J.C."/>
            <person name="Davis J."/>
            <person name="Dupree P."/>
            <person name="Keegstra K."/>
        </authorList>
    </citation>
    <scope>GENE FAMILY</scope>
</reference>
<reference key="9">
    <citation type="journal article" date="2014" name="Plant J.">
        <title>The plant glycosyltransferase clone collection for functional genomics.</title>
        <authorList>
            <person name="Lao J."/>
            <person name="Oikawa A."/>
            <person name="Bromley J.R."/>
            <person name="McInerney P."/>
            <person name="Suttangkakul A."/>
            <person name="Smith-Moritz A.M."/>
            <person name="Plahar H."/>
            <person name="Chiu T.-Y."/>
            <person name="Gonzalez Fernandez-Nino S.M.G."/>
            <person name="Ebert B."/>
            <person name="Yang F."/>
            <person name="Christiansen K.M."/>
            <person name="Hansen S.F."/>
            <person name="Stonebloom S."/>
            <person name="Adams P.D."/>
            <person name="Ronald P.C."/>
            <person name="Hillson N.J."/>
            <person name="Hadi M.Z."/>
            <person name="Vega-Sanchez M.E."/>
            <person name="Loque D."/>
            <person name="Scheller H.V."/>
            <person name="Heazlewood J.L."/>
        </authorList>
    </citation>
    <scope>WEB RESOURCE</scope>
</reference>
<reference key="10">
    <citation type="journal article" date="2018" name="Nat. Plants">
        <title>Pectin RG-I rhamnosyltransferases represent a novel plant-specific glycosyltransferase family.</title>
        <authorList>
            <person name="Takenaka Y."/>
            <person name="Kato K."/>
            <person name="Ogawa-Ohnishi M."/>
            <person name="Tsuruhama K."/>
            <person name="Kajiura H."/>
            <person name="Yagyu K."/>
            <person name="Takeda A."/>
            <person name="Takeda Y."/>
            <person name="Kunieda T."/>
            <person name="Hara-Nishimura I."/>
            <person name="Kuroha T."/>
            <person name="Nishitani K."/>
            <person name="Matsubayashi Y."/>
            <person name="Ishimizu T."/>
        </authorList>
    </citation>
    <scope>FUNCTION</scope>
    <scope>CATALYTIC ACTIVITY</scope>
</reference>
<feature type="chain" id="PRO_0000442066" description="Rhamnogalacturonan I rhamnosyltransferase 1">
    <location>
        <begin position="1"/>
        <end position="499"/>
    </location>
</feature>
<feature type="transmembrane region" description="Helical; Signal-anchor for type II membrane protein" evidence="7">
    <location>
        <begin position="31"/>
        <end position="50"/>
    </location>
</feature>
<feature type="binding site" evidence="2">
    <location>
        <begin position="261"/>
        <end position="263"/>
    </location>
    <ligand>
        <name>substrate</name>
    </ligand>
</feature>
<feature type="glycosylation site" description="N-linked (GlcNAc...) asparagine" evidence="4">
    <location>
        <position position="88"/>
    </location>
</feature>
<feature type="glycosylation site" description="N-linked (GlcNAc...) asparagine" evidence="4">
    <location>
        <position position="121"/>
    </location>
</feature>
<feature type="glycosylation site" description="N-linked (GlcNAc...) asparagine" evidence="4">
    <location>
        <position position="207"/>
    </location>
</feature>
<feature type="glycosylation site" description="N-linked (GlcNAc...) asparagine" evidence="4">
    <location>
        <position position="375"/>
    </location>
</feature>
<feature type="glycosylation site" description="N-linked (GlcNAc...) asparagine" evidence="4">
    <location>
        <position position="435"/>
    </location>
</feature>
<feature type="glycosylation site" description="N-linked (GlcNAc...) asparagine" evidence="4">
    <location>
        <position position="496"/>
    </location>
</feature>
<name>RRT4_ARATH</name>
<accession>Q6NQ51</accession>
<accession>Q9LMF6</accession>
<accession>Q9XI85</accession>
<comment type="function">
    <text evidence="1 5">Glycosyltransferase involved in the formation of rhamnogalacturonan I (RG-I) oligosaccharides in the seed coat mucilage, which is a specialized cell wall with abundant RG-I (By similarity). Transfers the rhamnose residue from UDP-beta-L-rhamnose to RG-I oligosaccharides (PubMed:30082766).</text>
</comment>
<comment type="catalytic activity">
    <reaction evidence="5">
        <text>alpha-D-galacturonosyl-[(1-&gt;2)-alpha-L-rhamnosyl-(1-&gt;4)-alpha-D-galacturonosyl](n) + UDP-beta-L-rhamnose = [(1-&gt;2)-alpha-L-rhamnosyl-(1-&gt;4)-alpha-D-galacturonosyl](n+1) + UDP + H(+)</text>
        <dbReference type="Rhea" id="RHEA:55736"/>
        <dbReference type="Rhea" id="RHEA-COMP:14274"/>
        <dbReference type="Rhea" id="RHEA-COMP:14276"/>
        <dbReference type="ChEBI" id="CHEBI:15378"/>
        <dbReference type="ChEBI" id="CHEBI:58223"/>
        <dbReference type="ChEBI" id="CHEBI:83836"/>
        <dbReference type="ChEBI" id="CHEBI:139158"/>
        <dbReference type="ChEBI" id="CHEBI:139159"/>
        <dbReference type="EC" id="2.4.1.351"/>
    </reaction>
</comment>
<comment type="pathway">
    <text evidence="7">Glycan metabolism; pectin biosynthesis.</text>
</comment>
<comment type="subcellular location">
    <subcellularLocation>
        <location evidence="1">Golgi apparatus membrane</location>
        <topology evidence="3">Single-pass type II membrane protein</topology>
    </subcellularLocation>
</comment>
<comment type="similarity">
    <text evidence="8">Belongs to the glycosyltransferase GT106 family.</text>
</comment>
<comment type="sequence caution" evidence="7">
    <conflict type="erroneous gene model prediction">
        <sequence resource="EMBL-CDS" id="AAD39288"/>
    </conflict>
</comment>
<comment type="sequence caution" evidence="7">
    <conflict type="erroneous gene model prediction">
        <sequence resource="EMBL-CDS" id="AAF79406"/>
    </conflict>
</comment>
<sequence length="499" mass="57571">MEVRSESNITQARSDKLPLPPAVPKPRVQVWFVRVCSSILVWTCLVQLFAAGELWHSRIFTGLTNQISRFSAPVEPVPLPPPLPPPRNYTSNGILLVSCNGGLNQMRSAICDMVTVARLLNLTLVVPELDKTSFWADPSGFEDIFDVRHFIDSLRDEVRILRRLPKRFSRKYGYQMFEMPPVSWSDEKYYLKQVLPLFSKHKVVHFNRTDTRLANNGLPLSLQWLRCRVNFQGLKFTPQLEALGSKLVRILQQRGPFVALHLRYEMDMLAFSGCTHGCTEEEAEELKKMRYTYPWWREKEIVSEERRAQGLCPLTPEEVALVLKALGFEKNTQIYIAAGEIYGSEHRLSVLREAFPRIVKKEMLLESAELQQFQNHSSQMAALDFMVSVASNTFIPTYDGNMAKVVEGHRRYLGYKKTILLDRKRLVELLDLHHNKTLTWDQFAVAVKEAHERRAGAPTHRRVISDKPKEEDYFYANPQECLCEGTNCHDLFGHRNLTH</sequence>
<gene>
    <name evidence="6" type="primary">RRT4</name>
    <name evidence="7" type="synonym">OFUT3</name>
    <name evidence="9" type="ordered locus">At1g14020</name>
    <name evidence="11" type="ORF">F16A14.24</name>
    <name evidence="10" type="ORF">F7A19.11</name>
</gene>
<protein>
    <recommendedName>
        <fullName evidence="6">Rhamnogalacturonan I rhamnosyltransferase 1</fullName>
        <ecNumber evidence="5">2.4.1.351</ecNumber>
    </recommendedName>
    <alternativeName>
        <fullName evidence="7">O-fucosyltransferase 3</fullName>
        <shortName evidence="7">O-FucT-3</shortName>
    </alternativeName>
    <alternativeName>
        <fullName evidence="7">O-fucosyltransferase family protein</fullName>
    </alternativeName>
</protein>
<keyword id="KW-0119">Carbohydrate metabolism</keyword>
<keyword id="KW-0961">Cell wall biogenesis/degradation</keyword>
<keyword id="KW-0294">Fucose metabolism</keyword>
<keyword id="KW-0325">Glycoprotein</keyword>
<keyword id="KW-0328">Glycosyltransferase</keyword>
<keyword id="KW-0333">Golgi apparatus</keyword>
<keyword id="KW-0472">Membrane</keyword>
<keyword id="KW-1185">Reference proteome</keyword>
<keyword id="KW-0735">Signal-anchor</keyword>
<keyword id="KW-0808">Transferase</keyword>
<keyword id="KW-0812">Transmembrane</keyword>
<keyword id="KW-1133">Transmembrane helix</keyword>
<organism>
    <name type="scientific">Arabidopsis thaliana</name>
    <name type="common">Mouse-ear cress</name>
    <dbReference type="NCBI Taxonomy" id="3702"/>
    <lineage>
        <taxon>Eukaryota</taxon>
        <taxon>Viridiplantae</taxon>
        <taxon>Streptophyta</taxon>
        <taxon>Embryophyta</taxon>
        <taxon>Tracheophyta</taxon>
        <taxon>Spermatophyta</taxon>
        <taxon>Magnoliopsida</taxon>
        <taxon>eudicotyledons</taxon>
        <taxon>Gunneridae</taxon>
        <taxon>Pentapetalae</taxon>
        <taxon>rosids</taxon>
        <taxon>malvids</taxon>
        <taxon>Brassicales</taxon>
        <taxon>Brassicaceae</taxon>
        <taxon>Camelineae</taxon>
        <taxon>Arabidopsis</taxon>
    </lineage>
</organism>